<sequence>MSRKSVVQRNLKRVAISAALSEKRKALVAIIKDESLSMSERFAAQLKLSKMPRDSSYIRIRNRCLITGRPRGYYRKFKMSRIVLRQLGSIGQIPGLTKSSW</sequence>
<comment type="function">
    <text evidence="1">Binds 16S rRNA, required for the assembly of 30S particles and may also be responsible for determining the conformation of the 16S rRNA at the A site.</text>
</comment>
<comment type="subunit">
    <text evidence="1">Part of the 30S ribosomal subunit. Contacts proteins S3 and S10.</text>
</comment>
<comment type="similarity">
    <text evidence="1">Belongs to the universal ribosomal protein uS14 family.</text>
</comment>
<feature type="chain" id="PRO_1000128294" description="Small ribosomal subunit protein uS14">
    <location>
        <begin position="1"/>
        <end position="101"/>
    </location>
</feature>
<reference key="1">
    <citation type="journal article" date="2006" name="PLoS Genet.">
        <title>Comparative genomics of emerging human ehrlichiosis agents.</title>
        <authorList>
            <person name="Dunning Hotopp J.C."/>
            <person name="Lin M."/>
            <person name="Madupu R."/>
            <person name="Crabtree J."/>
            <person name="Angiuoli S.V."/>
            <person name="Eisen J.A."/>
            <person name="Seshadri R."/>
            <person name="Ren Q."/>
            <person name="Wu M."/>
            <person name="Utterback T.R."/>
            <person name="Smith S."/>
            <person name="Lewis M."/>
            <person name="Khouri H."/>
            <person name="Zhang C."/>
            <person name="Niu H."/>
            <person name="Lin Q."/>
            <person name="Ohashi N."/>
            <person name="Zhi N."/>
            <person name="Nelson W.C."/>
            <person name="Brinkac L.M."/>
            <person name="Dodson R.J."/>
            <person name="Rosovitz M.J."/>
            <person name="Sundaram J.P."/>
            <person name="Daugherty S.C."/>
            <person name="Davidsen T."/>
            <person name="Durkin A.S."/>
            <person name="Gwinn M.L."/>
            <person name="Haft D.H."/>
            <person name="Selengut J.D."/>
            <person name="Sullivan S.A."/>
            <person name="Zafar N."/>
            <person name="Zhou L."/>
            <person name="Benahmed F."/>
            <person name="Forberger H."/>
            <person name="Halpin R."/>
            <person name="Mulligan S."/>
            <person name="Robinson J."/>
            <person name="White O."/>
            <person name="Rikihisa Y."/>
            <person name="Tettelin H."/>
        </authorList>
    </citation>
    <scope>NUCLEOTIDE SEQUENCE [LARGE SCALE GENOMIC DNA]</scope>
    <source>
        <strain>HZ</strain>
    </source>
</reference>
<keyword id="KW-0687">Ribonucleoprotein</keyword>
<keyword id="KW-0689">Ribosomal protein</keyword>
<keyword id="KW-0694">RNA-binding</keyword>
<keyword id="KW-0699">rRNA-binding</keyword>
<evidence type="ECO:0000255" key="1">
    <source>
        <dbReference type="HAMAP-Rule" id="MF_00537"/>
    </source>
</evidence>
<evidence type="ECO:0000305" key="2"/>
<name>RS14_ANAPZ</name>
<accession>Q2GL46</accession>
<gene>
    <name evidence="1" type="primary">rpsN</name>
    <name type="ordered locus">APH_0293</name>
</gene>
<dbReference type="EMBL" id="CP000235">
    <property type="protein sequence ID" value="ABD43583.1"/>
    <property type="molecule type" value="Genomic_DNA"/>
</dbReference>
<dbReference type="RefSeq" id="WP_011450428.1">
    <property type="nucleotide sequence ID" value="NC_007797.1"/>
</dbReference>
<dbReference type="SMR" id="Q2GL46"/>
<dbReference type="STRING" id="212042.APH_0293"/>
<dbReference type="PaxDb" id="212042-APH_0293"/>
<dbReference type="EnsemblBacteria" id="ABD43583">
    <property type="protein sequence ID" value="ABD43583"/>
    <property type="gene ID" value="APH_0293"/>
</dbReference>
<dbReference type="GeneID" id="92747510"/>
<dbReference type="KEGG" id="aph:APH_0293"/>
<dbReference type="eggNOG" id="COG0199">
    <property type="taxonomic scope" value="Bacteria"/>
</dbReference>
<dbReference type="HOGENOM" id="CLU_139869_0_1_5"/>
<dbReference type="Proteomes" id="UP000001943">
    <property type="component" value="Chromosome"/>
</dbReference>
<dbReference type="GO" id="GO:0005737">
    <property type="term" value="C:cytoplasm"/>
    <property type="evidence" value="ECO:0007669"/>
    <property type="project" value="UniProtKB-ARBA"/>
</dbReference>
<dbReference type="GO" id="GO:0015935">
    <property type="term" value="C:small ribosomal subunit"/>
    <property type="evidence" value="ECO:0007669"/>
    <property type="project" value="TreeGrafter"/>
</dbReference>
<dbReference type="GO" id="GO:0019843">
    <property type="term" value="F:rRNA binding"/>
    <property type="evidence" value="ECO:0007669"/>
    <property type="project" value="UniProtKB-UniRule"/>
</dbReference>
<dbReference type="GO" id="GO:0003735">
    <property type="term" value="F:structural constituent of ribosome"/>
    <property type="evidence" value="ECO:0007669"/>
    <property type="project" value="InterPro"/>
</dbReference>
<dbReference type="GO" id="GO:0006412">
    <property type="term" value="P:translation"/>
    <property type="evidence" value="ECO:0007669"/>
    <property type="project" value="UniProtKB-UniRule"/>
</dbReference>
<dbReference type="FunFam" id="1.10.287.1480:FF:000001">
    <property type="entry name" value="30S ribosomal protein S14"/>
    <property type="match status" value="1"/>
</dbReference>
<dbReference type="Gene3D" id="1.10.287.1480">
    <property type="match status" value="1"/>
</dbReference>
<dbReference type="HAMAP" id="MF_00537">
    <property type="entry name" value="Ribosomal_uS14_1"/>
    <property type="match status" value="1"/>
</dbReference>
<dbReference type="InterPro" id="IPR001209">
    <property type="entry name" value="Ribosomal_uS14"/>
</dbReference>
<dbReference type="InterPro" id="IPR023036">
    <property type="entry name" value="Ribosomal_uS14_bac/plastid"/>
</dbReference>
<dbReference type="InterPro" id="IPR018271">
    <property type="entry name" value="Ribosomal_uS14_CS"/>
</dbReference>
<dbReference type="NCBIfam" id="NF006477">
    <property type="entry name" value="PRK08881.1"/>
    <property type="match status" value="1"/>
</dbReference>
<dbReference type="PANTHER" id="PTHR19836">
    <property type="entry name" value="30S RIBOSOMAL PROTEIN S14"/>
    <property type="match status" value="1"/>
</dbReference>
<dbReference type="PANTHER" id="PTHR19836:SF19">
    <property type="entry name" value="SMALL RIBOSOMAL SUBUNIT PROTEIN US14M"/>
    <property type="match status" value="1"/>
</dbReference>
<dbReference type="Pfam" id="PF00253">
    <property type="entry name" value="Ribosomal_S14"/>
    <property type="match status" value="1"/>
</dbReference>
<dbReference type="SUPFAM" id="SSF57716">
    <property type="entry name" value="Glucocorticoid receptor-like (DNA-binding domain)"/>
    <property type="match status" value="1"/>
</dbReference>
<dbReference type="PROSITE" id="PS00527">
    <property type="entry name" value="RIBOSOMAL_S14"/>
    <property type="match status" value="1"/>
</dbReference>
<protein>
    <recommendedName>
        <fullName evidence="1">Small ribosomal subunit protein uS14</fullName>
    </recommendedName>
    <alternativeName>
        <fullName evidence="2">30S ribosomal protein S14</fullName>
    </alternativeName>
</protein>
<organism>
    <name type="scientific">Anaplasma phagocytophilum (strain HZ)</name>
    <dbReference type="NCBI Taxonomy" id="212042"/>
    <lineage>
        <taxon>Bacteria</taxon>
        <taxon>Pseudomonadati</taxon>
        <taxon>Pseudomonadota</taxon>
        <taxon>Alphaproteobacteria</taxon>
        <taxon>Rickettsiales</taxon>
        <taxon>Anaplasmataceae</taxon>
        <taxon>Anaplasma</taxon>
        <taxon>phagocytophilum group</taxon>
    </lineage>
</organism>
<proteinExistence type="inferred from homology"/>